<reference key="1">
    <citation type="journal article" date="2005" name="Science">
        <title>The transcriptional landscape of the mammalian genome.</title>
        <authorList>
            <person name="Carninci P."/>
            <person name="Kasukawa T."/>
            <person name="Katayama S."/>
            <person name="Gough J."/>
            <person name="Frith M.C."/>
            <person name="Maeda N."/>
            <person name="Oyama R."/>
            <person name="Ravasi T."/>
            <person name="Lenhard B."/>
            <person name="Wells C."/>
            <person name="Kodzius R."/>
            <person name="Shimokawa K."/>
            <person name="Bajic V.B."/>
            <person name="Brenner S.E."/>
            <person name="Batalov S."/>
            <person name="Forrest A.R."/>
            <person name="Zavolan M."/>
            <person name="Davis M.J."/>
            <person name="Wilming L.G."/>
            <person name="Aidinis V."/>
            <person name="Allen J.E."/>
            <person name="Ambesi-Impiombato A."/>
            <person name="Apweiler R."/>
            <person name="Aturaliya R.N."/>
            <person name="Bailey T.L."/>
            <person name="Bansal M."/>
            <person name="Baxter L."/>
            <person name="Beisel K.W."/>
            <person name="Bersano T."/>
            <person name="Bono H."/>
            <person name="Chalk A.M."/>
            <person name="Chiu K.P."/>
            <person name="Choudhary V."/>
            <person name="Christoffels A."/>
            <person name="Clutterbuck D.R."/>
            <person name="Crowe M.L."/>
            <person name="Dalla E."/>
            <person name="Dalrymple B.P."/>
            <person name="de Bono B."/>
            <person name="Della Gatta G."/>
            <person name="di Bernardo D."/>
            <person name="Down T."/>
            <person name="Engstrom P."/>
            <person name="Fagiolini M."/>
            <person name="Faulkner G."/>
            <person name="Fletcher C.F."/>
            <person name="Fukushima T."/>
            <person name="Furuno M."/>
            <person name="Futaki S."/>
            <person name="Gariboldi M."/>
            <person name="Georgii-Hemming P."/>
            <person name="Gingeras T.R."/>
            <person name="Gojobori T."/>
            <person name="Green R.E."/>
            <person name="Gustincich S."/>
            <person name="Harbers M."/>
            <person name="Hayashi Y."/>
            <person name="Hensch T.K."/>
            <person name="Hirokawa N."/>
            <person name="Hill D."/>
            <person name="Huminiecki L."/>
            <person name="Iacono M."/>
            <person name="Ikeo K."/>
            <person name="Iwama A."/>
            <person name="Ishikawa T."/>
            <person name="Jakt M."/>
            <person name="Kanapin A."/>
            <person name="Katoh M."/>
            <person name="Kawasawa Y."/>
            <person name="Kelso J."/>
            <person name="Kitamura H."/>
            <person name="Kitano H."/>
            <person name="Kollias G."/>
            <person name="Krishnan S.P."/>
            <person name="Kruger A."/>
            <person name="Kummerfeld S.K."/>
            <person name="Kurochkin I.V."/>
            <person name="Lareau L.F."/>
            <person name="Lazarevic D."/>
            <person name="Lipovich L."/>
            <person name="Liu J."/>
            <person name="Liuni S."/>
            <person name="McWilliam S."/>
            <person name="Madan Babu M."/>
            <person name="Madera M."/>
            <person name="Marchionni L."/>
            <person name="Matsuda H."/>
            <person name="Matsuzawa S."/>
            <person name="Miki H."/>
            <person name="Mignone F."/>
            <person name="Miyake S."/>
            <person name="Morris K."/>
            <person name="Mottagui-Tabar S."/>
            <person name="Mulder N."/>
            <person name="Nakano N."/>
            <person name="Nakauchi H."/>
            <person name="Ng P."/>
            <person name="Nilsson R."/>
            <person name="Nishiguchi S."/>
            <person name="Nishikawa S."/>
            <person name="Nori F."/>
            <person name="Ohara O."/>
            <person name="Okazaki Y."/>
            <person name="Orlando V."/>
            <person name="Pang K.C."/>
            <person name="Pavan W.J."/>
            <person name="Pavesi G."/>
            <person name="Pesole G."/>
            <person name="Petrovsky N."/>
            <person name="Piazza S."/>
            <person name="Reed J."/>
            <person name="Reid J.F."/>
            <person name="Ring B.Z."/>
            <person name="Ringwald M."/>
            <person name="Rost B."/>
            <person name="Ruan Y."/>
            <person name="Salzberg S.L."/>
            <person name="Sandelin A."/>
            <person name="Schneider C."/>
            <person name="Schoenbach C."/>
            <person name="Sekiguchi K."/>
            <person name="Semple C.A."/>
            <person name="Seno S."/>
            <person name="Sessa L."/>
            <person name="Sheng Y."/>
            <person name="Shibata Y."/>
            <person name="Shimada H."/>
            <person name="Shimada K."/>
            <person name="Silva D."/>
            <person name="Sinclair B."/>
            <person name="Sperling S."/>
            <person name="Stupka E."/>
            <person name="Sugiura K."/>
            <person name="Sultana R."/>
            <person name="Takenaka Y."/>
            <person name="Taki K."/>
            <person name="Tammoja K."/>
            <person name="Tan S.L."/>
            <person name="Tang S."/>
            <person name="Taylor M.S."/>
            <person name="Tegner J."/>
            <person name="Teichmann S.A."/>
            <person name="Ueda H.R."/>
            <person name="van Nimwegen E."/>
            <person name="Verardo R."/>
            <person name="Wei C.L."/>
            <person name="Yagi K."/>
            <person name="Yamanishi H."/>
            <person name="Zabarovsky E."/>
            <person name="Zhu S."/>
            <person name="Zimmer A."/>
            <person name="Hide W."/>
            <person name="Bult C."/>
            <person name="Grimmond S.M."/>
            <person name="Teasdale R.D."/>
            <person name="Liu E.T."/>
            <person name="Brusic V."/>
            <person name="Quackenbush J."/>
            <person name="Wahlestedt C."/>
            <person name="Mattick J.S."/>
            <person name="Hume D.A."/>
            <person name="Kai C."/>
            <person name="Sasaki D."/>
            <person name="Tomaru Y."/>
            <person name="Fukuda S."/>
            <person name="Kanamori-Katayama M."/>
            <person name="Suzuki M."/>
            <person name="Aoki J."/>
            <person name="Arakawa T."/>
            <person name="Iida J."/>
            <person name="Imamura K."/>
            <person name="Itoh M."/>
            <person name="Kato T."/>
            <person name="Kawaji H."/>
            <person name="Kawagashira N."/>
            <person name="Kawashima T."/>
            <person name="Kojima M."/>
            <person name="Kondo S."/>
            <person name="Konno H."/>
            <person name="Nakano K."/>
            <person name="Ninomiya N."/>
            <person name="Nishio T."/>
            <person name="Okada M."/>
            <person name="Plessy C."/>
            <person name="Shibata K."/>
            <person name="Shiraki T."/>
            <person name="Suzuki S."/>
            <person name="Tagami M."/>
            <person name="Waki K."/>
            <person name="Watahiki A."/>
            <person name="Okamura-Oho Y."/>
            <person name="Suzuki H."/>
            <person name="Kawai J."/>
            <person name="Hayashizaki Y."/>
        </authorList>
    </citation>
    <scope>NUCLEOTIDE SEQUENCE [LARGE SCALE MRNA]</scope>
    <source>
        <strain>C57BL/6J</strain>
        <tissue>Embryonic stem cell</tissue>
    </source>
</reference>
<reference key="2">
    <citation type="journal article" date="2004" name="Genome Res.">
        <title>The status, quality, and expansion of the NIH full-length cDNA project: the Mammalian Gene Collection (MGC).</title>
        <authorList>
            <consortium name="The MGC Project Team"/>
        </authorList>
    </citation>
    <scope>NUCLEOTIDE SEQUENCE [LARGE SCALE MRNA]</scope>
    <source>
        <tissue>Brain</tissue>
    </source>
</reference>
<reference key="3">
    <citation type="journal article" date="2010" name="Cell">
        <title>A tissue-specific atlas of mouse protein phosphorylation and expression.</title>
        <authorList>
            <person name="Huttlin E.L."/>
            <person name="Jedrychowski M.P."/>
            <person name="Elias J.E."/>
            <person name="Goswami T."/>
            <person name="Rad R."/>
            <person name="Beausoleil S.A."/>
            <person name="Villen J."/>
            <person name="Haas W."/>
            <person name="Sowa M.E."/>
            <person name="Gygi S.P."/>
        </authorList>
    </citation>
    <scope>IDENTIFICATION BY MASS SPECTROMETRY [LARGE SCALE ANALYSIS]</scope>
    <source>
        <tissue>Testis</tissue>
    </source>
</reference>
<reference key="4">
    <citation type="journal article" date="2013" name="Cell">
        <title>Acetylation-mediated proteasomal degradation of core histones during DNA repair and spermatogenesis.</title>
        <authorList>
            <person name="Qian M.X."/>
            <person name="Pang Y."/>
            <person name="Liu C.H."/>
            <person name="Haratake K."/>
            <person name="Du B.Y."/>
            <person name="Ji D.Y."/>
            <person name="Wang G.F."/>
            <person name="Zhu Q.Q."/>
            <person name="Song W."/>
            <person name="Yu Y."/>
            <person name="Zhang X.X."/>
            <person name="Huang H.T."/>
            <person name="Miao S."/>
            <person name="Chen L.B."/>
            <person name="Zhang Z.H."/>
            <person name="Liang Y.N."/>
            <person name="Liu S."/>
            <person name="Cha H."/>
            <person name="Yang D."/>
            <person name="Zhai Y."/>
            <person name="Komatsu T."/>
            <person name="Tsuruta F."/>
            <person name="Li H."/>
            <person name="Cao C."/>
            <person name="Li W."/>
            <person name="Li G.H."/>
            <person name="Cheng Y."/>
            <person name="Chiba T."/>
            <person name="Wang L."/>
            <person name="Goldberg A.L."/>
            <person name="Shen Y."/>
            <person name="Qiu X.B."/>
        </authorList>
    </citation>
    <scope>FUNCTION</scope>
    <scope>DEVELOPMENTAL STAGE</scope>
</reference>
<reference key="5">
    <citation type="journal article" date="2019" name="Nat. Commun.">
        <title>Meiosis I progression in spermatogenesis requires a type of testis-specific 20S core proteasome.</title>
        <authorList>
            <person name="Zhang Q."/>
            <person name="Ji S.Y."/>
            <person name="Busayavalasa K."/>
            <person name="Shao J."/>
            <person name="Yu C."/>
        </authorList>
    </citation>
    <scope>FUNCTION</scope>
    <scope>DISRUPTION PHENOTYPE</scope>
    <scope>DEVELOPMENTAL STAGE</scope>
</reference>
<reference key="6">
    <citation type="journal article" date="2019" name="PLoS Genet.">
        <title>The PSMA8 subunit of the spermatoproteasome is essential for proper meiotic exit and mouse fertility.</title>
        <authorList>
            <person name="Gomez-H L."/>
            <person name="Felipe-Medina N."/>
            <person name="Condezo Y.B."/>
            <person name="Garcia-Valiente R."/>
            <person name="Ramos I."/>
            <person name="Suja J.A."/>
            <person name="Barbero J.L."/>
            <person name="Roig I."/>
            <person name="Sanchez-Martin M."/>
            <person name="de Rooij D.G."/>
            <person name="Llano E."/>
            <person name="Pendas A.M."/>
        </authorList>
    </citation>
    <scope>FUNCTION</scope>
    <scope>DISRUPTION PHENOTYPE</scope>
    <scope>SUBCELLULAR LOCATION</scope>
    <scope>DEVELOPMENTAL STAGE</scope>
    <scope>INTERACTION WITH PSME3; PSME4; CCT6B; CCT2; TRIP12; NEDD4; TRIM36; RAD18; USP9X; USP34; USP5; USP47; CDK1; TRIP13; SIX6OS1 AND SYCE3</scope>
</reference>
<name>PSMA8_MOUSE</name>
<dbReference type="EMBL" id="AK010717">
    <property type="protein sequence ID" value="BAB27139.1"/>
    <property type="molecule type" value="mRNA"/>
</dbReference>
<dbReference type="EMBL" id="BC116990">
    <property type="protein sequence ID" value="AAI16991.1"/>
    <property type="molecule type" value="mRNA"/>
</dbReference>
<dbReference type="EMBL" id="BC116992">
    <property type="protein sequence ID" value="AAI16993.1"/>
    <property type="molecule type" value="mRNA"/>
</dbReference>
<dbReference type="CCDS" id="CCDS50226.1"/>
<dbReference type="RefSeq" id="NP_001157081.1">
    <property type="nucleotide sequence ID" value="NM_001163609.1"/>
</dbReference>
<dbReference type="SMR" id="Q9CWH6"/>
<dbReference type="BioGRID" id="216184">
    <property type="interactions" value="3"/>
</dbReference>
<dbReference type="FunCoup" id="Q9CWH6">
    <property type="interactions" value="426"/>
</dbReference>
<dbReference type="IntAct" id="Q9CWH6">
    <property type="interactions" value="1"/>
</dbReference>
<dbReference type="STRING" id="10090.ENSMUSP00000042590"/>
<dbReference type="MEROPS" id="T01.978"/>
<dbReference type="iPTMnet" id="Q9CWH6"/>
<dbReference type="PhosphoSitePlus" id="Q9CWH6"/>
<dbReference type="SwissPalm" id="Q9CWH6"/>
<dbReference type="jPOST" id="Q9CWH6"/>
<dbReference type="PaxDb" id="10090-ENSMUSP00000042590"/>
<dbReference type="PeptideAtlas" id="Q9CWH6"/>
<dbReference type="ProteomicsDB" id="291654"/>
<dbReference type="Antibodypedia" id="22107">
    <property type="antibodies" value="72 antibodies from 22 providers"/>
</dbReference>
<dbReference type="DNASU" id="73677"/>
<dbReference type="Ensembl" id="ENSMUST00000040860.3">
    <property type="protein sequence ID" value="ENSMUSP00000042590.2"/>
    <property type="gene ID" value="ENSMUSG00000036743.5"/>
</dbReference>
<dbReference type="GeneID" id="73677"/>
<dbReference type="KEGG" id="mmu:73677"/>
<dbReference type="UCSC" id="uc008edj.2">
    <property type="organism name" value="mouse"/>
</dbReference>
<dbReference type="AGR" id="MGI:1920927"/>
<dbReference type="CTD" id="143471"/>
<dbReference type="MGI" id="MGI:1920927">
    <property type="gene designation" value="Psma8"/>
</dbReference>
<dbReference type="VEuPathDB" id="HostDB:ENSMUSG00000036743"/>
<dbReference type="eggNOG" id="KOG0183">
    <property type="taxonomic scope" value="Eukaryota"/>
</dbReference>
<dbReference type="GeneTree" id="ENSGT00940000160354"/>
<dbReference type="HOGENOM" id="CLU_035750_4_0_1"/>
<dbReference type="InParanoid" id="Q9CWH6"/>
<dbReference type="OMA" id="AGTHSEW"/>
<dbReference type="OrthoDB" id="3145928at2759"/>
<dbReference type="PhylomeDB" id="Q9CWH6"/>
<dbReference type="TreeFam" id="TF106212"/>
<dbReference type="BRENDA" id="3.4.25.1">
    <property type="organism ID" value="3474"/>
</dbReference>
<dbReference type="BioGRID-ORCS" id="73677">
    <property type="hits" value="2 hits in 77 CRISPR screens"/>
</dbReference>
<dbReference type="ChiTaRS" id="Psma8">
    <property type="organism name" value="mouse"/>
</dbReference>
<dbReference type="PRO" id="PR:Q9CWH6"/>
<dbReference type="Proteomes" id="UP000000589">
    <property type="component" value="Chromosome 18"/>
</dbReference>
<dbReference type="RNAct" id="Q9CWH6">
    <property type="molecule type" value="protein"/>
</dbReference>
<dbReference type="Bgee" id="ENSMUSG00000036743">
    <property type="expression patterns" value="Expressed in spermatocyte and 71 other cell types or tissues"/>
</dbReference>
<dbReference type="ExpressionAtlas" id="Q9CWH6">
    <property type="expression patterns" value="baseline and differential"/>
</dbReference>
<dbReference type="GO" id="GO:0005829">
    <property type="term" value="C:cytosol"/>
    <property type="evidence" value="ECO:0000304"/>
    <property type="project" value="Reactome"/>
</dbReference>
<dbReference type="GO" id="GO:0005654">
    <property type="term" value="C:nucleoplasm"/>
    <property type="evidence" value="ECO:0000304"/>
    <property type="project" value="Reactome"/>
</dbReference>
<dbReference type="GO" id="GO:0005634">
    <property type="term" value="C:nucleus"/>
    <property type="evidence" value="ECO:0000314"/>
    <property type="project" value="UniProtKB"/>
</dbReference>
<dbReference type="GO" id="GO:0019773">
    <property type="term" value="C:proteasome core complex, alpha-subunit complex"/>
    <property type="evidence" value="ECO:0000250"/>
    <property type="project" value="UniProtKB"/>
</dbReference>
<dbReference type="GO" id="GO:1990111">
    <property type="term" value="C:spermatoproteasome complex"/>
    <property type="evidence" value="ECO:0000314"/>
    <property type="project" value="UniProtKB"/>
</dbReference>
<dbReference type="GO" id="GO:0030154">
    <property type="term" value="P:cell differentiation"/>
    <property type="evidence" value="ECO:0007669"/>
    <property type="project" value="UniProtKB-KW"/>
</dbReference>
<dbReference type="GO" id="GO:0051321">
    <property type="term" value="P:meiotic cell cycle"/>
    <property type="evidence" value="ECO:0000315"/>
    <property type="project" value="UniProtKB"/>
</dbReference>
<dbReference type="GO" id="GO:0010498">
    <property type="term" value="P:proteasomal protein catabolic process"/>
    <property type="evidence" value="ECO:0000315"/>
    <property type="project" value="UniProtKB"/>
</dbReference>
<dbReference type="GO" id="GO:0060631">
    <property type="term" value="P:regulation of meiosis I"/>
    <property type="evidence" value="ECO:0000315"/>
    <property type="project" value="UniProtKB"/>
</dbReference>
<dbReference type="GO" id="GO:0007283">
    <property type="term" value="P:spermatogenesis"/>
    <property type="evidence" value="ECO:0007669"/>
    <property type="project" value="UniProtKB-KW"/>
</dbReference>
<dbReference type="GO" id="GO:0006511">
    <property type="term" value="P:ubiquitin-dependent protein catabolic process"/>
    <property type="evidence" value="ECO:0007669"/>
    <property type="project" value="InterPro"/>
</dbReference>
<dbReference type="CDD" id="cd03755">
    <property type="entry name" value="proteasome_alpha_type_7"/>
    <property type="match status" value="1"/>
</dbReference>
<dbReference type="FunFam" id="3.60.20.10:FF:000018">
    <property type="entry name" value="Proteasome subunit alpha type"/>
    <property type="match status" value="1"/>
</dbReference>
<dbReference type="Gene3D" id="3.60.20.10">
    <property type="entry name" value="Glutamine Phosphoribosylpyrophosphate, subunit 1, domain 1"/>
    <property type="match status" value="1"/>
</dbReference>
<dbReference type="InterPro" id="IPR029055">
    <property type="entry name" value="Ntn_hydrolases_N"/>
</dbReference>
<dbReference type="InterPro" id="IPR050115">
    <property type="entry name" value="Proteasome_alpha"/>
</dbReference>
<dbReference type="InterPro" id="IPR023332">
    <property type="entry name" value="Proteasome_alpha-type"/>
</dbReference>
<dbReference type="InterPro" id="IPR000426">
    <property type="entry name" value="Proteasome_asu_N"/>
</dbReference>
<dbReference type="InterPro" id="IPR001353">
    <property type="entry name" value="Proteasome_sua/b"/>
</dbReference>
<dbReference type="NCBIfam" id="NF003075">
    <property type="entry name" value="PRK03996.1"/>
    <property type="match status" value="1"/>
</dbReference>
<dbReference type="PANTHER" id="PTHR11599">
    <property type="entry name" value="PROTEASOME SUBUNIT ALPHA/BETA"/>
    <property type="match status" value="1"/>
</dbReference>
<dbReference type="Pfam" id="PF00227">
    <property type="entry name" value="Proteasome"/>
    <property type="match status" value="1"/>
</dbReference>
<dbReference type="Pfam" id="PF10584">
    <property type="entry name" value="Proteasome_A_N"/>
    <property type="match status" value="1"/>
</dbReference>
<dbReference type="SMART" id="SM00948">
    <property type="entry name" value="Proteasome_A_N"/>
    <property type="match status" value="1"/>
</dbReference>
<dbReference type="SUPFAM" id="SSF56235">
    <property type="entry name" value="N-terminal nucleophile aminohydrolases (Ntn hydrolases)"/>
    <property type="match status" value="1"/>
</dbReference>
<dbReference type="PROSITE" id="PS00388">
    <property type="entry name" value="PROTEASOME_ALPHA_1"/>
    <property type="match status" value="1"/>
</dbReference>
<dbReference type="PROSITE" id="PS51475">
    <property type="entry name" value="PROTEASOME_ALPHA_2"/>
    <property type="match status" value="1"/>
</dbReference>
<organism>
    <name type="scientific">Mus musculus</name>
    <name type="common">Mouse</name>
    <dbReference type="NCBI Taxonomy" id="10090"/>
    <lineage>
        <taxon>Eukaryota</taxon>
        <taxon>Metazoa</taxon>
        <taxon>Chordata</taxon>
        <taxon>Craniata</taxon>
        <taxon>Vertebrata</taxon>
        <taxon>Euteleostomi</taxon>
        <taxon>Mammalia</taxon>
        <taxon>Eutheria</taxon>
        <taxon>Euarchontoglires</taxon>
        <taxon>Glires</taxon>
        <taxon>Rodentia</taxon>
        <taxon>Myomorpha</taxon>
        <taxon>Muroidea</taxon>
        <taxon>Muridae</taxon>
        <taxon>Murinae</taxon>
        <taxon>Mus</taxon>
        <taxon>Mus</taxon>
    </lineage>
</organism>
<gene>
    <name evidence="6 10" type="primary">Psma8</name>
    <name type="synonym">Psma7l</name>
</gene>
<comment type="function">
    <text evidence="3 4 5 8">Component of the spermatoproteasome, a proteasome specifically found in testis that promotes acetylation-dependent degradation of histones, thereby participating actively to the exchange of histones during spermatogenesis (PubMed:23706739, PubMed:31358751, PubMed:31437213). The proteasome is a protein complex that degrades unneeded or damaged proteins by proteolysis, a chemical reaction that breaks peptide bonds (Probable). Required for 20S core proteasome assembly, essential for the degradation of meiotic proteins RAD51 and RPA1 at late prophase I and the progression of meiosis I during spermatogenesis (PubMed:31358751). Localizes to the synaptonemal complex, a 'zipper'-like structure that holds homologous chromosome pairs in synapsis during meiotic prophase I (PubMed:31437213).</text>
</comment>
<comment type="subunit">
    <text evidence="3 4 5 8">Component of the outer alpha-ring of the 20S proteasome core which is composed of 28 subunits that are arranged in four stacked rings, resulting in a barrel-shaped structure (PubMed:23706739, PubMed:31358751). The catalytic chamber with the active sites is on the inside of the barrel (Probable). Interacts with canonical subunits of the spermatoproteasome, including proteasome activators PSME4 (also called PA200) and PSME3 (also called PA28-gamma) (PubMed:31437213). Interacts with proteasome-interacting proteins chaperones including CCT6B and CCT2, ubiquitin ligases (TRIP12, NEDD4, TRIM36 and RAD18), and ubiquitin specific proteases such as USP9X, USP34, USP5 and USP47 (PubMed:31437213). Interacts with meiotic proteins cyclin dependent kinase CDK1 and the ATPase TRIP13 as well as proteins of the synaptonemal complex SIX6OS1 and SYCE3 (PubMed:31437213).</text>
</comment>
<comment type="subcellular location">
    <subcellularLocation>
        <location evidence="5">Nucleus</location>
    </subcellularLocation>
    <text evidence="5">Localizes to the central region of the synaptonemal complex.</text>
</comment>
<comment type="developmental stage">
    <text evidence="3 4 5">In testes, expressed in spermatocytes at the pachytene stage (weakly in early pachynema and strongly in late pachynema), and its expression persisted thereafter throughout spermatogenesis.</text>
</comment>
<comment type="disruption phenotype">
    <text evidence="4 5">Knockout mice were obtained according to the expected Mendelian ratios and showed no obvious phenotypes with respect to viability and development; however males show infertility (PubMed:31358751, PubMed:31437213). PSMA8-null spermatocytes exhibit delayed M-phase entry and are finally arrested at this stage, resulting in male infertility (PubMed:31358751, PubMed:31437213).</text>
</comment>
<comment type="similarity">
    <text evidence="2">Belongs to the peptidase T1A family.</text>
</comment>
<comment type="caution">
    <text evidence="1 9">Predicted to have endopeptidase activity (By similarity). However, as it is located in the outer alpha-ring, it is suggested to lack catalytic activity and preferentially interact with regulatory complexes such as PSME4/PA200.</text>
</comment>
<sequence>MASRYDRAITVFSPDGHLFQVEYAQEAVKKGSTAVGIRGTNIVVLGVEKKSVAKLQDERTVRKICALDDHVCMAFAGLTADARVVISRARVECQSHKLTVEDPVTVEYITRFIATLKQKYTQSNGRRPFGISALIVGFDDDGIPRLYQTDPSGTYHAWKANAIGRSAKTVREFLEKNYTEDAISNDKEAIKLAIKALLEVVQSGGKNIELAIIRRDQPLKMFSAKEIELEVSEIEREKDEAEKTKSKKST</sequence>
<keyword id="KW-0221">Differentiation</keyword>
<keyword id="KW-0539">Nucleus</keyword>
<keyword id="KW-0647">Proteasome</keyword>
<keyword id="KW-1185">Reference proteome</keyword>
<keyword id="KW-0744">Spermatogenesis</keyword>
<proteinExistence type="evidence at protein level"/>
<feature type="chain" id="PRO_0000124150" description="Proteasome subunit alpha type-8">
    <location>
        <begin position="1"/>
        <end position="250"/>
    </location>
</feature>
<accession>Q9CWH6</accession>
<accession>Q14A44</accession>
<evidence type="ECO:0000255" key="1"/>
<evidence type="ECO:0000255" key="2">
    <source>
        <dbReference type="PROSITE-ProRule" id="PRU00808"/>
    </source>
</evidence>
<evidence type="ECO:0000269" key="3">
    <source>
    </source>
</evidence>
<evidence type="ECO:0000269" key="4">
    <source>
    </source>
</evidence>
<evidence type="ECO:0000269" key="5">
    <source>
    </source>
</evidence>
<evidence type="ECO:0000303" key="6">
    <source>
    </source>
</evidence>
<evidence type="ECO:0000303" key="7">
    <source>
    </source>
</evidence>
<evidence type="ECO:0000305" key="8"/>
<evidence type="ECO:0000305" key="9">
    <source>
    </source>
</evidence>
<evidence type="ECO:0000312" key="10">
    <source>
        <dbReference type="MGI" id="MGI:1920927"/>
    </source>
</evidence>
<protein>
    <recommendedName>
        <fullName evidence="7">Proteasome subunit alpha type-8</fullName>
    </recommendedName>
    <alternativeName>
        <fullName evidence="6">Proteasome alpha 4 subunit</fullName>
        <shortName evidence="6">Alpha4s</shortName>
    </alternativeName>
    <alternativeName>
        <fullName>Proteasome subunit alpha-type 7-like</fullName>
    </alternativeName>
</protein>